<gene>
    <name type="primary">Eip78C</name>
    <name type="synonym">NR1E1</name>
    <name type="ORF">CG18023</name>
</gene>
<accession>P45447</accession>
<accession>O18395</accession>
<accession>O18396</accession>
<accession>Q7KTW8</accession>
<accession>Q8IPT7</accession>
<accession>Q9NBW8</accession>
<accession>Q9NBW9</accession>
<accession>Q9VP64</accession>
<organism>
    <name type="scientific">Drosophila melanogaster</name>
    <name type="common">Fruit fly</name>
    <dbReference type="NCBI Taxonomy" id="7227"/>
    <lineage>
        <taxon>Eukaryota</taxon>
        <taxon>Metazoa</taxon>
        <taxon>Ecdysozoa</taxon>
        <taxon>Arthropoda</taxon>
        <taxon>Hexapoda</taxon>
        <taxon>Insecta</taxon>
        <taxon>Pterygota</taxon>
        <taxon>Neoptera</taxon>
        <taxon>Endopterygota</taxon>
        <taxon>Diptera</taxon>
        <taxon>Brachycera</taxon>
        <taxon>Muscomorpha</taxon>
        <taxon>Ephydroidea</taxon>
        <taxon>Drosophilidae</taxon>
        <taxon>Drosophila</taxon>
        <taxon>Sophophora</taxon>
    </lineage>
</organism>
<evidence type="ECO:0000255" key="1">
    <source>
        <dbReference type="PROSITE-ProRule" id="PRU00407"/>
    </source>
</evidence>
<evidence type="ECO:0000255" key="2">
    <source>
        <dbReference type="PROSITE-ProRule" id="PRU01189"/>
    </source>
</evidence>
<evidence type="ECO:0000256" key="3">
    <source>
        <dbReference type="SAM" id="MobiDB-lite"/>
    </source>
</evidence>
<evidence type="ECO:0000269" key="4">
    <source>
    </source>
</evidence>
<evidence type="ECO:0000269" key="5">
    <source>
    </source>
</evidence>
<evidence type="ECO:0000303" key="6">
    <source>
    </source>
</evidence>
<evidence type="ECO:0000303" key="7">
    <source>
    </source>
</evidence>
<evidence type="ECO:0000303" key="8">
    <source ref="3"/>
</evidence>
<evidence type="ECO:0000305" key="9"/>
<keyword id="KW-0025">Alternative splicing</keyword>
<keyword id="KW-0238">DNA-binding</keyword>
<keyword id="KW-0479">Metal-binding</keyword>
<keyword id="KW-0539">Nucleus</keyword>
<keyword id="KW-0675">Receptor</keyword>
<keyword id="KW-1185">Reference proteome</keyword>
<keyword id="KW-0804">Transcription</keyword>
<keyword id="KW-0805">Transcription regulation</keyword>
<keyword id="KW-0862">Zinc</keyword>
<keyword id="KW-0863">Zinc-finger</keyword>
<feature type="chain" id="PRO_0000053511" description="Ecdysone-induced protein 78C">
    <location>
        <begin position="1"/>
        <end position="862"/>
    </location>
</feature>
<feature type="domain" description="NR LBD" evidence="2">
    <location>
        <begin position="626"/>
        <end position="855"/>
    </location>
</feature>
<feature type="DNA-binding region" description="Nuclear receptor" evidence="1">
    <location>
        <begin position="360"/>
        <end position="435"/>
    </location>
</feature>
<feature type="zinc finger region" description="NR C4-type" evidence="1">
    <location>
        <begin position="363"/>
        <end position="383"/>
    </location>
</feature>
<feature type="zinc finger region" description="NR C4-type" evidence="1">
    <location>
        <begin position="399"/>
        <end position="418"/>
    </location>
</feature>
<feature type="region of interest" description="Disordered" evidence="3">
    <location>
        <begin position="28"/>
        <end position="83"/>
    </location>
</feature>
<feature type="region of interest" description="Disordered" evidence="3">
    <location>
        <begin position="97"/>
        <end position="138"/>
    </location>
</feature>
<feature type="region of interest" description="Disordered" evidence="3">
    <location>
        <begin position="173"/>
        <end position="210"/>
    </location>
</feature>
<feature type="region of interest" description="Disordered" evidence="3">
    <location>
        <begin position="230"/>
        <end position="353"/>
    </location>
</feature>
<feature type="region of interest" description="Disordered" evidence="3">
    <location>
        <begin position="444"/>
        <end position="557"/>
    </location>
</feature>
<feature type="compositionally biased region" description="Basic and acidic residues" evidence="3">
    <location>
        <begin position="37"/>
        <end position="46"/>
    </location>
</feature>
<feature type="compositionally biased region" description="Acidic residues" evidence="3">
    <location>
        <begin position="47"/>
        <end position="82"/>
    </location>
</feature>
<feature type="compositionally biased region" description="Polar residues" evidence="3">
    <location>
        <begin position="105"/>
        <end position="119"/>
    </location>
</feature>
<feature type="compositionally biased region" description="Low complexity" evidence="3">
    <location>
        <begin position="173"/>
        <end position="206"/>
    </location>
</feature>
<feature type="compositionally biased region" description="Low complexity" evidence="3">
    <location>
        <begin position="230"/>
        <end position="291"/>
    </location>
</feature>
<feature type="compositionally biased region" description="Low complexity" evidence="3">
    <location>
        <begin position="308"/>
        <end position="335"/>
    </location>
</feature>
<feature type="compositionally biased region" description="Low complexity" evidence="3">
    <location>
        <begin position="342"/>
        <end position="353"/>
    </location>
</feature>
<feature type="compositionally biased region" description="Low complexity" evidence="3">
    <location>
        <begin position="447"/>
        <end position="460"/>
    </location>
</feature>
<feature type="compositionally biased region" description="Polar residues" evidence="3">
    <location>
        <begin position="463"/>
        <end position="472"/>
    </location>
</feature>
<feature type="compositionally biased region" description="Low complexity" evidence="3">
    <location>
        <begin position="475"/>
        <end position="508"/>
    </location>
</feature>
<feature type="compositionally biased region" description="Polar residues" evidence="3">
    <location>
        <begin position="516"/>
        <end position="533"/>
    </location>
</feature>
<feature type="compositionally biased region" description="Low complexity" evidence="3">
    <location>
        <begin position="539"/>
        <end position="555"/>
    </location>
</feature>
<feature type="splice variant" id="VSP_003654" description="In isoform B." evidence="6 7 8">
    <location>
        <begin position="2"/>
        <end position="471"/>
    </location>
</feature>
<feature type="sequence conflict" description="In Ref. 2; CAA67384." evidence="9" ref="2">
    <original>ED</original>
    <variation>DH</variation>
    <location>
        <begin position="39"/>
        <end position="40"/>
    </location>
</feature>
<feature type="sequence conflict" description="In Ref. 1; AAA19975, 2; CAA67384 and 3; AAF69494." evidence="9" ref="1 2 3">
    <original>D</original>
    <variation>DEEED</variation>
    <location>
        <position position="77"/>
    </location>
</feature>
<feature type="sequence conflict" description="In Ref. 2; CAA67384." evidence="9" ref="2">
    <original>QQ</original>
    <variation>HE</variation>
    <location>
        <begin position="321"/>
        <end position="322"/>
    </location>
</feature>
<feature type="sequence conflict" description="In Ref. 6; CAA51523." evidence="9" ref="6">
    <original>A</original>
    <variation>V</variation>
    <location>
        <position position="426"/>
    </location>
</feature>
<feature type="sequence conflict" description="In Ref. 6; CAA51523." evidence="9" ref="6">
    <original>S</original>
    <variation>K</variation>
    <location>
        <position position="429"/>
    </location>
</feature>
<feature type="sequence conflict" description="In Ref. 3; AAF69495." evidence="9" ref="3">
    <location>
        <begin position="483"/>
        <end position="489"/>
    </location>
</feature>
<feature type="sequence conflict" description="In Ref. 1; AAA19975, 2; CAA67384 and 3; AAF69494." evidence="9" ref="1 2 3">
    <original>Q</original>
    <variation>P</variation>
    <location>
        <position position="498"/>
    </location>
</feature>
<feature type="sequence conflict" description="In Ref. 2; CAA67384/CAA67385." evidence="9" ref="2">
    <location>
        <position position="511"/>
    </location>
</feature>
<feature type="sequence conflict" description="In Ref. 1; AAA19975/AAA19976." evidence="9" ref="1">
    <location>
        <position position="731"/>
    </location>
</feature>
<reference key="1">
    <citation type="journal article" date="1993" name="Cell">
        <title>The Drosophila 78C early late puff contains E78, an ecdysone-inducible gene that encodes a novel member of the nuclear hormone receptor superfamily.</title>
        <authorList>
            <person name="Stone B.L."/>
            <person name="Thummel C.S."/>
        </authorList>
    </citation>
    <scope>NUCLEOTIDE SEQUENCE [MRNA] (ISOFORMS A AND B)</scope>
    <scope>FUNCTION</scope>
    <scope>INDUCTION</scope>
    <source>
        <strain>Canton-S</strain>
        <tissue>Larva</tissue>
        <tissue>Pupae</tissue>
    </source>
</reference>
<reference key="2">
    <citation type="journal article" date="1996" name="Genetics">
        <title>The Drosophila Eip78C gene is not vital but has a role in regulating chromosome puffs.</title>
        <authorList>
            <person name="Russell S.R.H."/>
            <person name="Heimbeck G."/>
            <person name="Goddard C.M."/>
            <person name="Carpenter A.T.C."/>
            <person name="Ashburner M."/>
        </authorList>
    </citation>
    <scope>NUCLEOTIDE SEQUENCE [MRNA] (ISOFORMS A AND B)</scope>
    <scope>FUNCTION</scope>
    <source>
        <strain>Canton-S</strain>
        <tissue>Pupae</tissue>
    </source>
</reference>
<reference key="3">
    <citation type="submission" date="2000-02" db="EMBL/GenBank/DDBJ databases">
        <authorList>
            <person name="Nairz K."/>
            <person name="Hafen E."/>
        </authorList>
    </citation>
    <scope>NUCLEOTIDE SEQUENCE [MRNA] (ISOFORMS A AND B)</scope>
</reference>
<reference key="4">
    <citation type="journal article" date="2000" name="Science">
        <title>The genome sequence of Drosophila melanogaster.</title>
        <authorList>
            <person name="Adams M.D."/>
            <person name="Celniker S.E."/>
            <person name="Holt R.A."/>
            <person name="Evans C.A."/>
            <person name="Gocayne J.D."/>
            <person name="Amanatides P.G."/>
            <person name="Scherer S.E."/>
            <person name="Li P.W."/>
            <person name="Hoskins R.A."/>
            <person name="Galle R.F."/>
            <person name="George R.A."/>
            <person name="Lewis S.E."/>
            <person name="Richards S."/>
            <person name="Ashburner M."/>
            <person name="Henderson S.N."/>
            <person name="Sutton G.G."/>
            <person name="Wortman J.R."/>
            <person name="Yandell M.D."/>
            <person name="Zhang Q."/>
            <person name="Chen L.X."/>
            <person name="Brandon R.C."/>
            <person name="Rogers Y.-H.C."/>
            <person name="Blazej R.G."/>
            <person name="Champe M."/>
            <person name="Pfeiffer B.D."/>
            <person name="Wan K.H."/>
            <person name="Doyle C."/>
            <person name="Baxter E.G."/>
            <person name="Helt G."/>
            <person name="Nelson C.R."/>
            <person name="Miklos G.L.G."/>
            <person name="Abril J.F."/>
            <person name="Agbayani A."/>
            <person name="An H.-J."/>
            <person name="Andrews-Pfannkoch C."/>
            <person name="Baldwin D."/>
            <person name="Ballew R.M."/>
            <person name="Basu A."/>
            <person name="Baxendale J."/>
            <person name="Bayraktaroglu L."/>
            <person name="Beasley E.M."/>
            <person name="Beeson K.Y."/>
            <person name="Benos P.V."/>
            <person name="Berman B.P."/>
            <person name="Bhandari D."/>
            <person name="Bolshakov S."/>
            <person name="Borkova D."/>
            <person name="Botchan M.R."/>
            <person name="Bouck J."/>
            <person name="Brokstein P."/>
            <person name="Brottier P."/>
            <person name="Burtis K.C."/>
            <person name="Busam D.A."/>
            <person name="Butler H."/>
            <person name="Cadieu E."/>
            <person name="Center A."/>
            <person name="Chandra I."/>
            <person name="Cherry J.M."/>
            <person name="Cawley S."/>
            <person name="Dahlke C."/>
            <person name="Davenport L.B."/>
            <person name="Davies P."/>
            <person name="de Pablos B."/>
            <person name="Delcher A."/>
            <person name="Deng Z."/>
            <person name="Mays A.D."/>
            <person name="Dew I."/>
            <person name="Dietz S.M."/>
            <person name="Dodson K."/>
            <person name="Doup L.E."/>
            <person name="Downes M."/>
            <person name="Dugan-Rocha S."/>
            <person name="Dunkov B.C."/>
            <person name="Dunn P."/>
            <person name="Durbin K.J."/>
            <person name="Evangelista C.C."/>
            <person name="Ferraz C."/>
            <person name="Ferriera S."/>
            <person name="Fleischmann W."/>
            <person name="Fosler C."/>
            <person name="Gabrielian A.E."/>
            <person name="Garg N.S."/>
            <person name="Gelbart W.M."/>
            <person name="Glasser K."/>
            <person name="Glodek A."/>
            <person name="Gong F."/>
            <person name="Gorrell J.H."/>
            <person name="Gu Z."/>
            <person name="Guan P."/>
            <person name="Harris M."/>
            <person name="Harris N.L."/>
            <person name="Harvey D.A."/>
            <person name="Heiman T.J."/>
            <person name="Hernandez J.R."/>
            <person name="Houck J."/>
            <person name="Hostin D."/>
            <person name="Houston K.A."/>
            <person name="Howland T.J."/>
            <person name="Wei M.-H."/>
            <person name="Ibegwam C."/>
            <person name="Jalali M."/>
            <person name="Kalush F."/>
            <person name="Karpen G.H."/>
            <person name="Ke Z."/>
            <person name="Kennison J.A."/>
            <person name="Ketchum K.A."/>
            <person name="Kimmel B.E."/>
            <person name="Kodira C.D."/>
            <person name="Kraft C.L."/>
            <person name="Kravitz S."/>
            <person name="Kulp D."/>
            <person name="Lai Z."/>
            <person name="Lasko P."/>
            <person name="Lei Y."/>
            <person name="Levitsky A.A."/>
            <person name="Li J.H."/>
            <person name="Li Z."/>
            <person name="Liang Y."/>
            <person name="Lin X."/>
            <person name="Liu X."/>
            <person name="Mattei B."/>
            <person name="McIntosh T.C."/>
            <person name="McLeod M.P."/>
            <person name="McPherson D."/>
            <person name="Merkulov G."/>
            <person name="Milshina N.V."/>
            <person name="Mobarry C."/>
            <person name="Morris J."/>
            <person name="Moshrefi A."/>
            <person name="Mount S.M."/>
            <person name="Moy M."/>
            <person name="Murphy B."/>
            <person name="Murphy L."/>
            <person name="Muzny D.M."/>
            <person name="Nelson D.L."/>
            <person name="Nelson D.R."/>
            <person name="Nelson K.A."/>
            <person name="Nixon K."/>
            <person name="Nusskern D.R."/>
            <person name="Pacleb J.M."/>
            <person name="Palazzolo M."/>
            <person name="Pittman G.S."/>
            <person name="Pan S."/>
            <person name="Pollard J."/>
            <person name="Puri V."/>
            <person name="Reese M.G."/>
            <person name="Reinert K."/>
            <person name="Remington K."/>
            <person name="Saunders R.D.C."/>
            <person name="Scheeler F."/>
            <person name="Shen H."/>
            <person name="Shue B.C."/>
            <person name="Siden-Kiamos I."/>
            <person name="Simpson M."/>
            <person name="Skupski M.P."/>
            <person name="Smith T.J."/>
            <person name="Spier E."/>
            <person name="Spradling A.C."/>
            <person name="Stapleton M."/>
            <person name="Strong R."/>
            <person name="Sun E."/>
            <person name="Svirskas R."/>
            <person name="Tector C."/>
            <person name="Turner R."/>
            <person name="Venter E."/>
            <person name="Wang A.H."/>
            <person name="Wang X."/>
            <person name="Wang Z.-Y."/>
            <person name="Wassarman D.A."/>
            <person name="Weinstock G.M."/>
            <person name="Weissenbach J."/>
            <person name="Williams S.M."/>
            <person name="Woodage T."/>
            <person name="Worley K.C."/>
            <person name="Wu D."/>
            <person name="Yang S."/>
            <person name="Yao Q.A."/>
            <person name="Ye J."/>
            <person name="Yeh R.-F."/>
            <person name="Zaveri J.S."/>
            <person name="Zhan M."/>
            <person name="Zhang G."/>
            <person name="Zhao Q."/>
            <person name="Zheng L."/>
            <person name="Zheng X.H."/>
            <person name="Zhong F.N."/>
            <person name="Zhong W."/>
            <person name="Zhou X."/>
            <person name="Zhu S.C."/>
            <person name="Zhu X."/>
            <person name="Smith H.O."/>
            <person name="Gibbs R.A."/>
            <person name="Myers E.W."/>
            <person name="Rubin G.M."/>
            <person name="Venter J.C."/>
        </authorList>
    </citation>
    <scope>NUCLEOTIDE SEQUENCE [LARGE SCALE GENOMIC DNA]</scope>
    <source>
        <strain>Berkeley</strain>
    </source>
</reference>
<reference key="5">
    <citation type="journal article" date="2002" name="Genome Biol.">
        <title>Annotation of the Drosophila melanogaster euchromatic genome: a systematic review.</title>
        <authorList>
            <person name="Misra S."/>
            <person name="Crosby M.A."/>
            <person name="Mungall C.J."/>
            <person name="Matthews B.B."/>
            <person name="Campbell K.S."/>
            <person name="Hradecky P."/>
            <person name="Huang Y."/>
            <person name="Kaminker J.S."/>
            <person name="Millburn G.H."/>
            <person name="Prochnik S.E."/>
            <person name="Smith C.D."/>
            <person name="Tupy J.L."/>
            <person name="Whitfield E.J."/>
            <person name="Bayraktaroglu L."/>
            <person name="Berman B.P."/>
            <person name="Bettencourt B.R."/>
            <person name="Celniker S.E."/>
            <person name="de Grey A.D.N.J."/>
            <person name="Drysdale R.A."/>
            <person name="Harris N.L."/>
            <person name="Richter J."/>
            <person name="Russo S."/>
            <person name="Schroeder A.J."/>
            <person name="Shu S.Q."/>
            <person name="Stapleton M."/>
            <person name="Yamada C."/>
            <person name="Ashburner M."/>
            <person name="Gelbart W.M."/>
            <person name="Rubin G.M."/>
            <person name="Lewis S.E."/>
        </authorList>
    </citation>
    <scope>GENOME REANNOTATION</scope>
    <scope>ALTERNATIVE SPLICING</scope>
    <source>
        <strain>Berkeley</strain>
    </source>
</reference>
<reference key="6">
    <citation type="journal article" date="1993" name="Biochim. Biophys. Acta">
        <title>DR-78, a novel Drosophila melanogaster genomic DNA fragment highly homologous to the DNA-binding domain of thyroid hormone-retinoic acid-vitamin D receptor subfamily.</title>
        <authorList>
            <person name="Martin-Blanco E."/>
            <person name="Kornberg T.B."/>
        </authorList>
    </citation>
    <scope>NUCLEOTIDE SEQUENCE [GENOMIC DNA] OF 318-429 (ISOFORM A)</scope>
</reference>
<comment type="function">
    <text evidence="4 5">Induces the early late puff 78C which triggers puparium formation and development.</text>
</comment>
<comment type="subcellular location">
    <subcellularLocation>
        <location evidence="9">Nucleus</location>
    </subcellularLocation>
</comment>
<comment type="alternative products">
    <event type="alternative splicing"/>
    <isoform>
        <id>P45447-1</id>
        <name>A</name>
        <name>E78A</name>
        <sequence type="displayed"/>
    </isoform>
    <isoform>
        <id>P45447-2</id>
        <name>B</name>
        <name>E78B</name>
        <sequence type="described" ref="VSP_003654"/>
    </isoform>
</comment>
<comment type="developmental stage">
    <text>Isoform A is expressed only in mid-pupal stages, while isoform B is maximally expressed in newly formed prepupae and immediately following isoform A in mid-pupae.</text>
</comment>
<comment type="induction">
    <text evidence="4">Isoform A and isoform B require ecdysone for activity. Isoform B also requires ecdysone-induced proteins for maximal expression.</text>
</comment>
<comment type="similarity">
    <text evidence="9">Belongs to the nuclear hormone receptor family. NR1 subfamily.</text>
</comment>
<comment type="sequence caution" evidence="9">
    <conflict type="frameshift">
        <sequence resource="EMBL-CDS" id="AAA19975"/>
    </conflict>
</comment>
<comment type="sequence caution" evidence="9">
    <conflict type="frameshift">
        <sequence resource="EMBL-CDS" id="AAA19976"/>
    </conflict>
</comment>
<comment type="sequence caution" evidence="9">
    <conflict type="frameshift">
        <sequence resource="EMBL-CDS" id="CAA51523"/>
    </conflict>
</comment>
<sequence length="862" mass="94747">MDVYQIELEEQAQIRSKLLVETCVKHSSSEQQQLQVKQEDLIKDFTRDEEEQPSEEEAEEEDNEEDEEEEGEEEEEDEDEEALLPVVNFNANSDFNLHFFDTPEDSSTQGAYSEANSLESEQEEEKQTQQHQQQKQHHRDLEDCLSAIEADPLQLLHCDDFYRTSALAESVAASLSPQQQQQRQHTHQQQQQQQQQQQHPGQQQHQLNCTLSNGGGALYTISSVHQFGPASNHNTSSSSPSSSAAHSSPDSGCSSASSSGSSRSCGSSSASSSSSAVSSTISSGRSSNNSVVNPAATSSSVAHLNKEQQQQPLPTTQLQQQQQHQQQLQHPQQQQSFGLADSSSSNGSSNNNNGVSSKSFVPCKVCGDKASGYHYGVTSCEGCKGFFRRSIQKQIEYRCLRDGKCLVIRLNRNRCQYCRFKKCLSAGMSRDSVRYGRVPKRSRELNGAAASSAAAGAPASLNVDDSTSSTLHPSHLQQQQQQHLLQQQQQQQHQPQLQQHHQLQQQPHVSGVRVKTPSTPQTPQMCSIASSPSELGGCNSANNNNNNNNNSSSGNASGGSGVSVGVVVVGGHQQLVGGSMVGMAGMGTDAHQVGMCHDGLAGTANELTVYDVIMCVSQAHRLNCSYTEELTRELMRRPVTVPQNGIASTVAESLEFQKIWLWQQFSARVTPGVQRIVEFAKRVPGFCDFTQDDQLILIKLGFFEVWLTHVARLINEATLTLDDGAYLTRQQLEILYDSDFVNALLNFANTLNAYGLSDTEIGLFSAMVLLASDRAGLSEPKVIGRARELVAEALRVQILRSRAGSPQALQLMPALEAKIPELRSLGAKHFSHLDWLRMNWTKLRLPPLFAEIFDIPKADDEL</sequence>
<dbReference type="EMBL" id="U01087">
    <property type="protein sequence ID" value="AAA19975.1"/>
    <property type="status" value="ALT_FRAME"/>
    <property type="molecule type" value="mRNA"/>
</dbReference>
<dbReference type="EMBL" id="U01088">
    <property type="protein sequence ID" value="AAA19976.2"/>
    <property type="status" value="ALT_FRAME"/>
    <property type="molecule type" value="mRNA"/>
</dbReference>
<dbReference type="EMBL" id="X98881">
    <property type="protein sequence ID" value="CAA67384.1"/>
    <property type="molecule type" value="mRNA"/>
</dbReference>
<dbReference type="EMBL" id="X98882">
    <property type="protein sequence ID" value="CAA67385.1"/>
    <property type="molecule type" value="mRNA"/>
</dbReference>
<dbReference type="EMBL" id="AF238308">
    <property type="protein sequence ID" value="AAF69494.1"/>
    <property type="molecule type" value="mRNA"/>
</dbReference>
<dbReference type="EMBL" id="AF238309">
    <property type="protein sequence ID" value="AAF69495.1"/>
    <property type="molecule type" value="mRNA"/>
</dbReference>
<dbReference type="EMBL" id="AE014296">
    <property type="protein sequence ID" value="AAF51692.2"/>
    <property type="molecule type" value="Genomic_DNA"/>
</dbReference>
<dbReference type="EMBL" id="AE014296">
    <property type="protein sequence ID" value="AAN12161.3"/>
    <property type="molecule type" value="Genomic_DNA"/>
</dbReference>
<dbReference type="EMBL" id="X73045">
    <property type="protein sequence ID" value="CAA51523.1"/>
    <property type="status" value="ALT_FRAME"/>
    <property type="molecule type" value="Genomic_DNA"/>
</dbReference>
<dbReference type="PIR" id="A49070">
    <property type="entry name" value="A49070"/>
</dbReference>
<dbReference type="PIR" id="B49070">
    <property type="entry name" value="B49070"/>
</dbReference>
<dbReference type="PIR" id="S43435">
    <property type="entry name" value="S43435"/>
</dbReference>
<dbReference type="RefSeq" id="NP_001246862.1">
    <molecule id="P45447-1"/>
    <property type="nucleotide sequence ID" value="NM_001259933.1"/>
</dbReference>
<dbReference type="RefSeq" id="NP_001246863.1">
    <molecule id="P45447-1"/>
    <property type="nucleotide sequence ID" value="NM_001259934.1"/>
</dbReference>
<dbReference type="RefSeq" id="NP_524195.2">
    <molecule id="P45447-1"/>
    <property type="nucleotide sequence ID" value="NM_079471.3"/>
</dbReference>
<dbReference type="RefSeq" id="NP_730609.3">
    <molecule id="P45447-2"/>
    <property type="nucleotide sequence ID" value="NM_168892.3"/>
</dbReference>
<dbReference type="SMR" id="P45447"/>
<dbReference type="BioGRID" id="65593">
    <property type="interactions" value="57"/>
</dbReference>
<dbReference type="FunCoup" id="P45447">
    <property type="interactions" value="60"/>
</dbReference>
<dbReference type="IntAct" id="P45447">
    <property type="interactions" value="52"/>
</dbReference>
<dbReference type="STRING" id="7227.FBpp0077963"/>
<dbReference type="GlyGen" id="P45447">
    <property type="glycosylation" value="1 site"/>
</dbReference>
<dbReference type="PaxDb" id="7227-FBpp0297287"/>
<dbReference type="EnsemblMetazoa" id="FBtr0078306">
    <molecule id="P45447-1"/>
    <property type="protein sequence ID" value="FBpp0077963"/>
    <property type="gene ID" value="FBgn0004865"/>
</dbReference>
<dbReference type="EnsemblMetazoa" id="FBtr0078307">
    <molecule id="P45447-2"/>
    <property type="protein sequence ID" value="FBpp0077964"/>
    <property type="gene ID" value="FBgn0004865"/>
</dbReference>
<dbReference type="EnsemblMetazoa" id="FBtr0306157">
    <molecule id="P45447-1"/>
    <property type="protein sequence ID" value="FBpp0297287"/>
    <property type="gene ID" value="FBgn0004865"/>
</dbReference>
<dbReference type="EnsemblMetazoa" id="FBtr0306158">
    <molecule id="P45447-1"/>
    <property type="protein sequence ID" value="FBpp0297288"/>
    <property type="gene ID" value="FBgn0004865"/>
</dbReference>
<dbReference type="GeneID" id="40345"/>
<dbReference type="KEGG" id="dme:Dmel_CG18023"/>
<dbReference type="AGR" id="FB:FBgn0004865"/>
<dbReference type="CTD" id="40345"/>
<dbReference type="FlyBase" id="FBgn0004865">
    <property type="gene designation" value="Eip78C"/>
</dbReference>
<dbReference type="VEuPathDB" id="VectorBase:FBgn0004865"/>
<dbReference type="eggNOG" id="KOG3575">
    <property type="taxonomic scope" value="Eukaryota"/>
</dbReference>
<dbReference type="eggNOG" id="KOG4846">
    <property type="taxonomic scope" value="Eukaryota"/>
</dbReference>
<dbReference type="HOGENOM" id="CLU_007368_2_2_1"/>
<dbReference type="InParanoid" id="P45447"/>
<dbReference type="OMA" id="XLSCTAL"/>
<dbReference type="OrthoDB" id="6081310at2759"/>
<dbReference type="PhylomeDB" id="P45447"/>
<dbReference type="SignaLink" id="P45447"/>
<dbReference type="BioGRID-ORCS" id="40345">
    <property type="hits" value="0 hits in 1 CRISPR screen"/>
</dbReference>
<dbReference type="GenomeRNAi" id="40345"/>
<dbReference type="PRO" id="PR:P45447"/>
<dbReference type="Proteomes" id="UP000000803">
    <property type="component" value="Chromosome 3L"/>
</dbReference>
<dbReference type="Bgee" id="FBgn0004865">
    <property type="expression patterns" value="Expressed in male accessory gland secondary cell (Drosophila) in male reproductive gland and 147 other cell types or tissues"/>
</dbReference>
<dbReference type="ExpressionAtlas" id="P45447">
    <property type="expression patterns" value="baseline and differential"/>
</dbReference>
<dbReference type="GO" id="GO:0005634">
    <property type="term" value="C:nucleus"/>
    <property type="evidence" value="ECO:0007669"/>
    <property type="project" value="UniProtKB-SubCell"/>
</dbReference>
<dbReference type="GO" id="GO:0003700">
    <property type="term" value="F:DNA-binding transcription factor activity"/>
    <property type="evidence" value="ECO:0007669"/>
    <property type="project" value="InterPro"/>
</dbReference>
<dbReference type="GO" id="GO:0043565">
    <property type="term" value="F:sequence-specific DNA binding"/>
    <property type="evidence" value="ECO:0007669"/>
    <property type="project" value="InterPro"/>
</dbReference>
<dbReference type="GO" id="GO:0008270">
    <property type="term" value="F:zinc ion binding"/>
    <property type="evidence" value="ECO:0007669"/>
    <property type="project" value="UniProtKB-KW"/>
</dbReference>
<dbReference type="GO" id="GO:0045892">
    <property type="term" value="P:negative regulation of DNA-templated transcription"/>
    <property type="evidence" value="ECO:0000250"/>
    <property type="project" value="FlyBase"/>
</dbReference>
<dbReference type="CDD" id="cd07165">
    <property type="entry name" value="NR_DBD_DmE78_like"/>
    <property type="match status" value="1"/>
</dbReference>
<dbReference type="CDD" id="cd06941">
    <property type="entry name" value="NR_LBD_DmE78_like"/>
    <property type="match status" value="1"/>
</dbReference>
<dbReference type="FunFam" id="1.10.565.10:FF:000044">
    <property type="entry name" value="Ecdysone-induced protein 78C, isoform D"/>
    <property type="match status" value="1"/>
</dbReference>
<dbReference type="FunFam" id="3.30.50.10:FF:000056">
    <property type="entry name" value="Peroxisome proliferator-activated receptor gamma"/>
    <property type="match status" value="1"/>
</dbReference>
<dbReference type="Gene3D" id="3.30.50.10">
    <property type="entry name" value="Erythroid Transcription Factor GATA-1, subunit A"/>
    <property type="match status" value="1"/>
</dbReference>
<dbReference type="Gene3D" id="1.10.565.10">
    <property type="entry name" value="Retinoid X Receptor"/>
    <property type="match status" value="1"/>
</dbReference>
<dbReference type="InterPro" id="IPR035500">
    <property type="entry name" value="NHR-like_dom_sf"/>
</dbReference>
<dbReference type="InterPro" id="IPR048008">
    <property type="entry name" value="NR_LBD_DmE78-like"/>
</dbReference>
<dbReference type="InterPro" id="IPR000536">
    <property type="entry name" value="Nucl_hrmn_rcpt_lig-bd"/>
</dbReference>
<dbReference type="InterPro" id="IPR001723">
    <property type="entry name" value="Nuclear_hrmn_rcpt"/>
</dbReference>
<dbReference type="InterPro" id="IPR001628">
    <property type="entry name" value="Znf_hrmn_rcpt"/>
</dbReference>
<dbReference type="InterPro" id="IPR013088">
    <property type="entry name" value="Znf_NHR/GATA"/>
</dbReference>
<dbReference type="PANTHER" id="PTHR45805:SF10">
    <property type="entry name" value="ECDYSONE-INDUCED PROTEIN 78C"/>
    <property type="match status" value="1"/>
</dbReference>
<dbReference type="PANTHER" id="PTHR45805">
    <property type="entry name" value="NUCLEAR HORMONE RECEPTOR HR3-RELATED"/>
    <property type="match status" value="1"/>
</dbReference>
<dbReference type="Pfam" id="PF00104">
    <property type="entry name" value="Hormone_recep"/>
    <property type="match status" value="1"/>
</dbReference>
<dbReference type="Pfam" id="PF00105">
    <property type="entry name" value="zf-C4"/>
    <property type="match status" value="1"/>
</dbReference>
<dbReference type="PRINTS" id="PR00398">
    <property type="entry name" value="STRDHORMONER"/>
</dbReference>
<dbReference type="PRINTS" id="PR00047">
    <property type="entry name" value="STROIDFINGER"/>
</dbReference>
<dbReference type="SMART" id="SM00430">
    <property type="entry name" value="HOLI"/>
    <property type="match status" value="1"/>
</dbReference>
<dbReference type="SMART" id="SM00399">
    <property type="entry name" value="ZnF_C4"/>
    <property type="match status" value="1"/>
</dbReference>
<dbReference type="SUPFAM" id="SSF57716">
    <property type="entry name" value="Glucocorticoid receptor-like (DNA-binding domain)"/>
    <property type="match status" value="1"/>
</dbReference>
<dbReference type="SUPFAM" id="SSF48508">
    <property type="entry name" value="Nuclear receptor ligand-binding domain"/>
    <property type="match status" value="1"/>
</dbReference>
<dbReference type="PROSITE" id="PS51843">
    <property type="entry name" value="NR_LBD"/>
    <property type="match status" value="1"/>
</dbReference>
<dbReference type="PROSITE" id="PS00031">
    <property type="entry name" value="NUCLEAR_REC_DBD_1"/>
    <property type="match status" value="1"/>
</dbReference>
<dbReference type="PROSITE" id="PS51030">
    <property type="entry name" value="NUCLEAR_REC_DBD_2"/>
    <property type="match status" value="1"/>
</dbReference>
<protein>
    <recommendedName>
        <fullName>Ecdysone-induced protein 78C</fullName>
        <shortName>DR-78</shortName>
    </recommendedName>
    <alternativeName>
        <fullName>Nuclear receptor subfamily 1 group E member 1</fullName>
    </alternativeName>
</protein>
<proteinExistence type="evidence at transcript level"/>
<name>E78C_DROME</name>